<reference key="1">
    <citation type="submission" date="2006-12" db="EMBL/GenBank/DDBJ databases">
        <title>Complete sequence of chromosome 1 of Nocardioides sp. JS614.</title>
        <authorList>
            <person name="Copeland A."/>
            <person name="Lucas S."/>
            <person name="Lapidus A."/>
            <person name="Barry K."/>
            <person name="Detter J.C."/>
            <person name="Glavina del Rio T."/>
            <person name="Hammon N."/>
            <person name="Israni S."/>
            <person name="Dalin E."/>
            <person name="Tice H."/>
            <person name="Pitluck S."/>
            <person name="Thompson L.S."/>
            <person name="Brettin T."/>
            <person name="Bruce D."/>
            <person name="Han C."/>
            <person name="Tapia R."/>
            <person name="Schmutz J."/>
            <person name="Larimer F."/>
            <person name="Land M."/>
            <person name="Hauser L."/>
            <person name="Kyrpides N."/>
            <person name="Kim E."/>
            <person name="Mattes T."/>
            <person name="Gossett J."/>
            <person name="Richardson P."/>
        </authorList>
    </citation>
    <scope>NUCLEOTIDE SEQUENCE [LARGE SCALE GENOMIC DNA]</scope>
    <source>
        <strain>ATCC BAA-499 / JS614</strain>
    </source>
</reference>
<dbReference type="EC" id="6.3.5.3" evidence="1"/>
<dbReference type="EMBL" id="CP000509">
    <property type="protein sequence ID" value="ABL83823.1"/>
    <property type="molecule type" value="Genomic_DNA"/>
</dbReference>
<dbReference type="SMR" id="A1SPT8"/>
<dbReference type="STRING" id="196162.Noca_4326"/>
<dbReference type="KEGG" id="nca:Noca_4326"/>
<dbReference type="eggNOG" id="COG0046">
    <property type="taxonomic scope" value="Bacteria"/>
</dbReference>
<dbReference type="HOGENOM" id="CLU_003100_0_1_11"/>
<dbReference type="OrthoDB" id="9804441at2"/>
<dbReference type="UniPathway" id="UPA00074">
    <property type="reaction ID" value="UER00128"/>
</dbReference>
<dbReference type="Proteomes" id="UP000000640">
    <property type="component" value="Chromosome"/>
</dbReference>
<dbReference type="GO" id="GO:0005737">
    <property type="term" value="C:cytoplasm"/>
    <property type="evidence" value="ECO:0007669"/>
    <property type="project" value="UniProtKB-SubCell"/>
</dbReference>
<dbReference type="GO" id="GO:0005524">
    <property type="term" value="F:ATP binding"/>
    <property type="evidence" value="ECO:0007669"/>
    <property type="project" value="UniProtKB-UniRule"/>
</dbReference>
<dbReference type="GO" id="GO:0000287">
    <property type="term" value="F:magnesium ion binding"/>
    <property type="evidence" value="ECO:0007669"/>
    <property type="project" value="UniProtKB-UniRule"/>
</dbReference>
<dbReference type="GO" id="GO:0004642">
    <property type="term" value="F:phosphoribosylformylglycinamidine synthase activity"/>
    <property type="evidence" value="ECO:0007669"/>
    <property type="project" value="UniProtKB-UniRule"/>
</dbReference>
<dbReference type="GO" id="GO:0006189">
    <property type="term" value="P:'de novo' IMP biosynthetic process"/>
    <property type="evidence" value="ECO:0007669"/>
    <property type="project" value="UniProtKB-UniRule"/>
</dbReference>
<dbReference type="CDD" id="cd02203">
    <property type="entry name" value="PurL_repeat1"/>
    <property type="match status" value="1"/>
</dbReference>
<dbReference type="CDD" id="cd02204">
    <property type="entry name" value="PurL_repeat2"/>
    <property type="match status" value="1"/>
</dbReference>
<dbReference type="FunFam" id="3.30.1330.10:FF:000004">
    <property type="entry name" value="Phosphoribosylformylglycinamidine synthase subunit PurL"/>
    <property type="match status" value="1"/>
</dbReference>
<dbReference type="Gene3D" id="3.90.650.10">
    <property type="entry name" value="PurM-like C-terminal domain"/>
    <property type="match status" value="2"/>
</dbReference>
<dbReference type="Gene3D" id="3.30.1330.10">
    <property type="entry name" value="PurM-like, N-terminal domain"/>
    <property type="match status" value="2"/>
</dbReference>
<dbReference type="HAMAP" id="MF_00420">
    <property type="entry name" value="PurL_2"/>
    <property type="match status" value="1"/>
</dbReference>
<dbReference type="InterPro" id="IPR010074">
    <property type="entry name" value="PRibForGlyAmidine_synth_PurL"/>
</dbReference>
<dbReference type="InterPro" id="IPR041609">
    <property type="entry name" value="PurL_linker"/>
</dbReference>
<dbReference type="InterPro" id="IPR010918">
    <property type="entry name" value="PurM-like_C_dom"/>
</dbReference>
<dbReference type="InterPro" id="IPR036676">
    <property type="entry name" value="PurM-like_C_sf"/>
</dbReference>
<dbReference type="InterPro" id="IPR016188">
    <property type="entry name" value="PurM-like_N"/>
</dbReference>
<dbReference type="InterPro" id="IPR036921">
    <property type="entry name" value="PurM-like_N_sf"/>
</dbReference>
<dbReference type="NCBIfam" id="TIGR01736">
    <property type="entry name" value="FGAM_synth_II"/>
    <property type="match status" value="1"/>
</dbReference>
<dbReference type="NCBIfam" id="NF002290">
    <property type="entry name" value="PRK01213.1"/>
    <property type="match status" value="1"/>
</dbReference>
<dbReference type="PANTHER" id="PTHR43555">
    <property type="entry name" value="PHOSPHORIBOSYLFORMYLGLYCINAMIDINE SYNTHASE SUBUNIT PURL"/>
    <property type="match status" value="1"/>
</dbReference>
<dbReference type="PANTHER" id="PTHR43555:SF1">
    <property type="entry name" value="PHOSPHORIBOSYLFORMYLGLYCINAMIDINE SYNTHASE SUBUNIT PURL"/>
    <property type="match status" value="1"/>
</dbReference>
<dbReference type="Pfam" id="PF00586">
    <property type="entry name" value="AIRS"/>
    <property type="match status" value="2"/>
</dbReference>
<dbReference type="Pfam" id="PF02769">
    <property type="entry name" value="AIRS_C"/>
    <property type="match status" value="2"/>
</dbReference>
<dbReference type="Pfam" id="PF18072">
    <property type="entry name" value="FGAR-AT_linker"/>
    <property type="match status" value="1"/>
</dbReference>
<dbReference type="PIRSF" id="PIRSF001587">
    <property type="entry name" value="FGAM_synthase_II"/>
    <property type="match status" value="1"/>
</dbReference>
<dbReference type="SUPFAM" id="SSF56042">
    <property type="entry name" value="PurM C-terminal domain-like"/>
    <property type="match status" value="2"/>
</dbReference>
<dbReference type="SUPFAM" id="SSF55326">
    <property type="entry name" value="PurM N-terminal domain-like"/>
    <property type="match status" value="2"/>
</dbReference>
<sequence>MLDTVAVAAEDPHHDQPWADLGLKADEYARIREILGRRPTSSELAMYSVMWSEHCSYKSSKVHLKQFSELAEVLAQRQPDAGRLLAGIGENAGVVDIGQGYAVTFKVESHNHPSYVEPYQGAATGVGGIVRDILAMGARPVAVMDPLRFGPLDADDTHRVLPGIVAGVGGYGNCLGLPNIGGEAVFDATYLGNPLVNALCVGVLRHEDLHLAKASGVGNQVILYGARTGGDGIGGVSVLASETFDADGPAKRPSVQVGDPFMEKLLIECTLEIFAAGLVAGIQDLGGAGLSCATSELASAGDGGMHVELDRVPLRDSTLAPEEILMSESQERMMAVVEPDDVAAFLAICAKWDVEAVVVGEVTDTGRLQIDWHGERVVDVPPRSVAHDGPTYHRPFARPAWQDDLQADAAESLPRPGSGDELRKTLLTLVASPNLCDKSWITDQYDRYVRGNTVLAQPSDSGMVRVDEETDLGVALATDCNGRFALLDPYAGAQLALAEAYRNVATGGATPLAISDCLNFGSPEDPAVMWQFAEACRGLKDGCLELGIPVTGGNVSLYNQTGETAILPTPVVAVLGVIEDVTRRTPSAWSTGGERVFLLGETREELSGSEWAHVVHGHLGGLPPQLDLEAERTLAELLHDAVGLVSSAHDLSDGGLAQALVEGALRHGVGVSVEVPDDAFVGLFSESPGRVVVTVPDGAAERLVELAERHGVELTALGVTGGDALVVEGQFEIPLDELRDAWTTTLPAALG</sequence>
<accession>A1SPT8</accession>
<organism>
    <name type="scientific">Nocardioides sp. (strain ATCC BAA-499 / JS614)</name>
    <dbReference type="NCBI Taxonomy" id="196162"/>
    <lineage>
        <taxon>Bacteria</taxon>
        <taxon>Bacillati</taxon>
        <taxon>Actinomycetota</taxon>
        <taxon>Actinomycetes</taxon>
        <taxon>Propionibacteriales</taxon>
        <taxon>Nocardioidaceae</taxon>
        <taxon>Nocardioides</taxon>
    </lineage>
</organism>
<gene>
    <name evidence="1" type="primary">purL</name>
    <name type="ordered locus">Noca_4326</name>
</gene>
<keyword id="KW-0067">ATP-binding</keyword>
<keyword id="KW-0963">Cytoplasm</keyword>
<keyword id="KW-0436">Ligase</keyword>
<keyword id="KW-0460">Magnesium</keyword>
<keyword id="KW-0479">Metal-binding</keyword>
<keyword id="KW-0547">Nucleotide-binding</keyword>
<keyword id="KW-0658">Purine biosynthesis</keyword>
<keyword id="KW-1185">Reference proteome</keyword>
<evidence type="ECO:0000255" key="1">
    <source>
        <dbReference type="HAMAP-Rule" id="MF_00420"/>
    </source>
</evidence>
<feature type="chain" id="PRO_1000050329" description="Phosphoribosylformylglycinamidine synthase subunit PurL">
    <location>
        <begin position="1"/>
        <end position="751"/>
    </location>
</feature>
<feature type="active site" evidence="1">
    <location>
        <position position="54"/>
    </location>
</feature>
<feature type="active site" description="Proton acceptor" evidence="1">
    <location>
        <position position="110"/>
    </location>
</feature>
<feature type="binding site" evidence="1">
    <location>
        <position position="57"/>
    </location>
    <ligand>
        <name>ATP</name>
        <dbReference type="ChEBI" id="CHEBI:30616"/>
    </ligand>
</feature>
<feature type="binding site" evidence="1">
    <location>
        <position position="106"/>
    </location>
    <ligand>
        <name>ATP</name>
        <dbReference type="ChEBI" id="CHEBI:30616"/>
    </ligand>
</feature>
<feature type="binding site" evidence="1">
    <location>
        <position position="108"/>
    </location>
    <ligand>
        <name>Mg(2+)</name>
        <dbReference type="ChEBI" id="CHEBI:18420"/>
        <label>1</label>
    </ligand>
</feature>
<feature type="binding site" evidence="1">
    <location>
        <begin position="109"/>
        <end position="112"/>
    </location>
    <ligand>
        <name>substrate</name>
    </ligand>
</feature>
<feature type="binding site" evidence="1">
    <location>
        <position position="131"/>
    </location>
    <ligand>
        <name>substrate</name>
    </ligand>
</feature>
<feature type="binding site" evidence="1">
    <location>
        <position position="132"/>
    </location>
    <ligand>
        <name>Mg(2+)</name>
        <dbReference type="ChEBI" id="CHEBI:18420"/>
        <label>2</label>
    </ligand>
</feature>
<feature type="binding site" evidence="1">
    <location>
        <position position="256"/>
    </location>
    <ligand>
        <name>substrate</name>
    </ligand>
</feature>
<feature type="binding site" evidence="1">
    <location>
        <position position="284"/>
    </location>
    <ligand>
        <name>Mg(2+)</name>
        <dbReference type="ChEBI" id="CHEBI:18420"/>
        <label>2</label>
    </ligand>
</feature>
<feature type="binding site" evidence="1">
    <location>
        <begin position="328"/>
        <end position="330"/>
    </location>
    <ligand>
        <name>substrate</name>
    </ligand>
</feature>
<feature type="binding site" evidence="1">
    <location>
        <position position="516"/>
    </location>
    <ligand>
        <name>ATP</name>
        <dbReference type="ChEBI" id="CHEBI:30616"/>
    </ligand>
</feature>
<feature type="binding site" evidence="1">
    <location>
        <position position="553"/>
    </location>
    <ligand>
        <name>ATP</name>
        <dbReference type="ChEBI" id="CHEBI:30616"/>
    </ligand>
</feature>
<feature type="binding site" evidence="1">
    <location>
        <position position="554"/>
    </location>
    <ligand>
        <name>Mg(2+)</name>
        <dbReference type="ChEBI" id="CHEBI:18420"/>
        <label>1</label>
    </ligand>
</feature>
<feature type="binding site" evidence="1">
    <location>
        <position position="556"/>
    </location>
    <ligand>
        <name>substrate</name>
    </ligand>
</feature>
<proteinExistence type="inferred from homology"/>
<comment type="function">
    <text evidence="1">Part of the phosphoribosylformylglycinamidine synthase complex involved in the purines biosynthetic pathway. Catalyzes the ATP-dependent conversion of formylglycinamide ribonucleotide (FGAR) and glutamine to yield formylglycinamidine ribonucleotide (FGAM) and glutamate. The FGAM synthase complex is composed of three subunits. PurQ produces an ammonia molecule by converting glutamine to glutamate. PurL transfers the ammonia molecule to FGAR to form FGAM in an ATP-dependent manner. PurS interacts with PurQ and PurL and is thought to assist in the transfer of the ammonia molecule from PurQ to PurL.</text>
</comment>
<comment type="catalytic activity">
    <reaction evidence="1">
        <text>N(2)-formyl-N(1)-(5-phospho-beta-D-ribosyl)glycinamide + L-glutamine + ATP + H2O = 2-formamido-N(1)-(5-O-phospho-beta-D-ribosyl)acetamidine + L-glutamate + ADP + phosphate + H(+)</text>
        <dbReference type="Rhea" id="RHEA:17129"/>
        <dbReference type="ChEBI" id="CHEBI:15377"/>
        <dbReference type="ChEBI" id="CHEBI:15378"/>
        <dbReference type="ChEBI" id="CHEBI:29985"/>
        <dbReference type="ChEBI" id="CHEBI:30616"/>
        <dbReference type="ChEBI" id="CHEBI:43474"/>
        <dbReference type="ChEBI" id="CHEBI:58359"/>
        <dbReference type="ChEBI" id="CHEBI:147286"/>
        <dbReference type="ChEBI" id="CHEBI:147287"/>
        <dbReference type="ChEBI" id="CHEBI:456216"/>
        <dbReference type="EC" id="6.3.5.3"/>
    </reaction>
</comment>
<comment type="pathway">
    <text evidence="1">Purine metabolism; IMP biosynthesis via de novo pathway; 5-amino-1-(5-phospho-D-ribosyl)imidazole from N(2)-formyl-N(1)-(5-phospho-D-ribosyl)glycinamide: step 1/2.</text>
</comment>
<comment type="subunit">
    <text evidence="1">Monomer. Part of the FGAM synthase complex composed of 1 PurL, 1 PurQ and 2 PurS subunits.</text>
</comment>
<comment type="subcellular location">
    <subcellularLocation>
        <location evidence="1">Cytoplasm</location>
    </subcellularLocation>
</comment>
<comment type="similarity">
    <text evidence="1">Belongs to the FGAMS family.</text>
</comment>
<name>PURL_NOCSJ</name>
<protein>
    <recommendedName>
        <fullName evidence="1">Phosphoribosylformylglycinamidine synthase subunit PurL</fullName>
        <shortName evidence="1">FGAM synthase</shortName>
        <ecNumber evidence="1">6.3.5.3</ecNumber>
    </recommendedName>
    <alternativeName>
        <fullName evidence="1">Formylglycinamide ribonucleotide amidotransferase subunit II</fullName>
        <shortName evidence="1">FGAR amidotransferase II</shortName>
        <shortName evidence="1">FGAR-AT II</shortName>
    </alternativeName>
    <alternativeName>
        <fullName evidence="1">Glutamine amidotransferase PurL</fullName>
    </alternativeName>
    <alternativeName>
        <fullName evidence="1">Phosphoribosylformylglycinamidine synthase subunit II</fullName>
    </alternativeName>
</protein>